<name>RISB_STAA3</name>
<protein>
    <recommendedName>
        <fullName evidence="1">6,7-dimethyl-8-ribityllumazine synthase</fullName>
        <shortName evidence="1">DMRL synthase</shortName>
        <shortName evidence="1">LS</shortName>
        <shortName evidence="1">Lumazine synthase</shortName>
        <ecNumber evidence="1">2.5.1.78</ecNumber>
    </recommendedName>
</protein>
<gene>
    <name evidence="1" type="primary">ribH</name>
    <name type="ordered locus">SAUSA300_1712</name>
</gene>
<evidence type="ECO:0000255" key="1">
    <source>
        <dbReference type="HAMAP-Rule" id="MF_00178"/>
    </source>
</evidence>
<proteinExistence type="inferred from homology"/>
<reference key="1">
    <citation type="journal article" date="2006" name="Lancet">
        <title>Complete genome sequence of USA300, an epidemic clone of community-acquired meticillin-resistant Staphylococcus aureus.</title>
        <authorList>
            <person name="Diep B.A."/>
            <person name="Gill S.R."/>
            <person name="Chang R.F."/>
            <person name="Phan T.H."/>
            <person name="Chen J.H."/>
            <person name="Davidson M.G."/>
            <person name="Lin F."/>
            <person name="Lin J."/>
            <person name="Carleton H.A."/>
            <person name="Mongodin E.F."/>
            <person name="Sensabaugh G.F."/>
            <person name="Perdreau-Remington F."/>
        </authorList>
    </citation>
    <scope>NUCLEOTIDE SEQUENCE [LARGE SCALE GENOMIC DNA]</scope>
    <source>
        <strain>USA300</strain>
    </source>
</reference>
<dbReference type="EC" id="2.5.1.78" evidence="1"/>
<dbReference type="EMBL" id="CP000255">
    <property type="protein sequence ID" value="ABD21201.1"/>
    <property type="molecule type" value="Genomic_DNA"/>
</dbReference>
<dbReference type="SMR" id="Q2FFX3"/>
<dbReference type="KEGG" id="saa:SAUSA300_1712"/>
<dbReference type="HOGENOM" id="CLU_089358_1_1_9"/>
<dbReference type="OMA" id="CQGVTQG"/>
<dbReference type="UniPathway" id="UPA00275">
    <property type="reaction ID" value="UER00404"/>
</dbReference>
<dbReference type="Proteomes" id="UP000001939">
    <property type="component" value="Chromosome"/>
</dbReference>
<dbReference type="GO" id="GO:0005829">
    <property type="term" value="C:cytosol"/>
    <property type="evidence" value="ECO:0007669"/>
    <property type="project" value="TreeGrafter"/>
</dbReference>
<dbReference type="GO" id="GO:0009349">
    <property type="term" value="C:riboflavin synthase complex"/>
    <property type="evidence" value="ECO:0007669"/>
    <property type="project" value="InterPro"/>
</dbReference>
<dbReference type="GO" id="GO:0000906">
    <property type="term" value="F:6,7-dimethyl-8-ribityllumazine synthase activity"/>
    <property type="evidence" value="ECO:0007669"/>
    <property type="project" value="UniProtKB-UniRule"/>
</dbReference>
<dbReference type="GO" id="GO:0009231">
    <property type="term" value="P:riboflavin biosynthetic process"/>
    <property type="evidence" value="ECO:0007669"/>
    <property type="project" value="UniProtKB-UniRule"/>
</dbReference>
<dbReference type="CDD" id="cd09209">
    <property type="entry name" value="Lumazine_synthase-I"/>
    <property type="match status" value="1"/>
</dbReference>
<dbReference type="FunFam" id="3.40.50.960:FF:000001">
    <property type="entry name" value="6,7-dimethyl-8-ribityllumazine synthase"/>
    <property type="match status" value="1"/>
</dbReference>
<dbReference type="Gene3D" id="3.40.50.960">
    <property type="entry name" value="Lumazine/riboflavin synthase"/>
    <property type="match status" value="1"/>
</dbReference>
<dbReference type="HAMAP" id="MF_00178">
    <property type="entry name" value="Lumazine_synth"/>
    <property type="match status" value="1"/>
</dbReference>
<dbReference type="InterPro" id="IPR034964">
    <property type="entry name" value="LS"/>
</dbReference>
<dbReference type="InterPro" id="IPR002180">
    <property type="entry name" value="LS/RS"/>
</dbReference>
<dbReference type="InterPro" id="IPR036467">
    <property type="entry name" value="LS/RS_sf"/>
</dbReference>
<dbReference type="NCBIfam" id="TIGR00114">
    <property type="entry name" value="lumazine-synth"/>
    <property type="match status" value="1"/>
</dbReference>
<dbReference type="NCBIfam" id="NF000812">
    <property type="entry name" value="PRK00061.1-4"/>
    <property type="match status" value="1"/>
</dbReference>
<dbReference type="PANTHER" id="PTHR21058:SF0">
    <property type="entry name" value="6,7-DIMETHYL-8-RIBITYLLUMAZINE SYNTHASE"/>
    <property type="match status" value="1"/>
</dbReference>
<dbReference type="PANTHER" id="PTHR21058">
    <property type="entry name" value="6,7-DIMETHYL-8-RIBITYLLUMAZINE SYNTHASE DMRL SYNTHASE LUMAZINE SYNTHASE"/>
    <property type="match status" value="1"/>
</dbReference>
<dbReference type="Pfam" id="PF00885">
    <property type="entry name" value="DMRL_synthase"/>
    <property type="match status" value="1"/>
</dbReference>
<dbReference type="SUPFAM" id="SSF52121">
    <property type="entry name" value="Lumazine synthase"/>
    <property type="match status" value="1"/>
</dbReference>
<sequence>MNFEGKLIGKDLKVAIVVSRFNDFITGRLLEGAKDTLIRHDVNEDNIDVAFVPGAFEIPLVAKKLASSGNYDAVITLGCVIRGATSHYDYVCNEVAKGVSKVNDQTNVPVIFGILTTESIEQAVERAGTKAGNKGAEAAVSAIEMANLLKSIKA</sequence>
<organism>
    <name type="scientific">Staphylococcus aureus (strain USA300)</name>
    <dbReference type="NCBI Taxonomy" id="367830"/>
    <lineage>
        <taxon>Bacteria</taxon>
        <taxon>Bacillati</taxon>
        <taxon>Bacillota</taxon>
        <taxon>Bacilli</taxon>
        <taxon>Bacillales</taxon>
        <taxon>Staphylococcaceae</taxon>
        <taxon>Staphylococcus</taxon>
    </lineage>
</organism>
<comment type="function">
    <text evidence="1">Catalyzes the formation of 6,7-dimethyl-8-ribityllumazine by condensation of 5-amino-6-(D-ribitylamino)uracil with 3,4-dihydroxy-2-butanone 4-phosphate. This is the penultimate step in the biosynthesis of riboflavin.</text>
</comment>
<comment type="catalytic activity">
    <reaction evidence="1">
        <text>(2S)-2-hydroxy-3-oxobutyl phosphate + 5-amino-6-(D-ribitylamino)uracil = 6,7-dimethyl-8-(1-D-ribityl)lumazine + phosphate + 2 H2O + H(+)</text>
        <dbReference type="Rhea" id="RHEA:26152"/>
        <dbReference type="ChEBI" id="CHEBI:15377"/>
        <dbReference type="ChEBI" id="CHEBI:15378"/>
        <dbReference type="ChEBI" id="CHEBI:15934"/>
        <dbReference type="ChEBI" id="CHEBI:43474"/>
        <dbReference type="ChEBI" id="CHEBI:58201"/>
        <dbReference type="ChEBI" id="CHEBI:58830"/>
        <dbReference type="EC" id="2.5.1.78"/>
    </reaction>
</comment>
<comment type="pathway">
    <text evidence="1">Cofactor biosynthesis; riboflavin biosynthesis; riboflavin from 2-hydroxy-3-oxobutyl phosphate and 5-amino-6-(D-ribitylamino)uracil: step 1/2.</text>
</comment>
<comment type="subunit">
    <text evidence="1">Forms an icosahedral capsid composed of 60 subunits, arranged as a dodecamer of pentamers.</text>
</comment>
<comment type="similarity">
    <text evidence="1">Belongs to the DMRL synthase family.</text>
</comment>
<keyword id="KW-0686">Riboflavin biosynthesis</keyword>
<keyword id="KW-0808">Transferase</keyword>
<accession>Q2FFX3</accession>
<feature type="chain" id="PRO_1000040521" description="6,7-dimethyl-8-ribityllumazine synthase">
    <location>
        <begin position="1"/>
        <end position="154"/>
    </location>
</feature>
<feature type="active site" description="Proton donor" evidence="1">
    <location>
        <position position="87"/>
    </location>
</feature>
<feature type="binding site" evidence="1">
    <location>
        <position position="21"/>
    </location>
    <ligand>
        <name>5-amino-6-(D-ribitylamino)uracil</name>
        <dbReference type="ChEBI" id="CHEBI:15934"/>
    </ligand>
</feature>
<feature type="binding site" evidence="1">
    <location>
        <begin position="55"/>
        <end position="57"/>
    </location>
    <ligand>
        <name>5-amino-6-(D-ribitylamino)uracil</name>
        <dbReference type="ChEBI" id="CHEBI:15934"/>
    </ligand>
</feature>
<feature type="binding site" evidence="1">
    <location>
        <begin position="79"/>
        <end position="81"/>
    </location>
    <ligand>
        <name>5-amino-6-(D-ribitylamino)uracil</name>
        <dbReference type="ChEBI" id="CHEBI:15934"/>
    </ligand>
</feature>
<feature type="binding site" evidence="1">
    <location>
        <begin position="84"/>
        <end position="85"/>
    </location>
    <ligand>
        <name>(2S)-2-hydroxy-3-oxobutyl phosphate</name>
        <dbReference type="ChEBI" id="CHEBI:58830"/>
    </ligand>
</feature>
<feature type="binding site" evidence="1">
    <location>
        <position position="112"/>
    </location>
    <ligand>
        <name>5-amino-6-(D-ribitylamino)uracil</name>
        <dbReference type="ChEBI" id="CHEBI:15934"/>
    </ligand>
</feature>
<feature type="binding site" evidence="1">
    <location>
        <position position="126"/>
    </location>
    <ligand>
        <name>(2S)-2-hydroxy-3-oxobutyl phosphate</name>
        <dbReference type="ChEBI" id="CHEBI:58830"/>
    </ligand>
</feature>